<keyword id="KW-0963">Cytoplasm</keyword>
<keyword id="KW-0444">Lipid biosynthesis</keyword>
<keyword id="KW-0443">Lipid metabolism</keyword>
<keyword id="KW-0520">NAD</keyword>
<keyword id="KW-0521">NADP</keyword>
<keyword id="KW-0547">Nucleotide-binding</keyword>
<keyword id="KW-0560">Oxidoreductase</keyword>
<keyword id="KW-0594">Phospholipid biosynthesis</keyword>
<keyword id="KW-1208">Phospholipid metabolism</keyword>
<keyword id="KW-1185">Reference proteome</keyword>
<accession>Q4JUX5</accession>
<sequence>MVQVAVMGAGSWGTTVAKVFADAGNEVRLWARRAEVAEDVRDNHRNSAYLGDIELPAALTGTTDPAEALNGAEIVVLGVPSQSLRENLQNWKDLIGPDASLVSLAKGIEHSSGLRMSQLVSEVADVPSERVAVLTGPNLAREVAQGQPAATVVACTDMDRAKLIQAAVAAPYFRPYTNTDVIGCEIAGTCKNVIALAAGIAAGMGFGDNTAATVITRGLAETTRLALEVGADARTLSGLAGMGDLVATCTSTLSRNRRFGEHLGKGETLEQAAASTKGQVAEGVVSSQSVFELAEKVGVETPITEAVVGVCHEGADVQQIMMGLLGRSKKAE</sequence>
<protein>
    <recommendedName>
        <fullName evidence="1">Glycerol-3-phosphate dehydrogenase [NAD(P)+]</fullName>
        <ecNumber evidence="1">1.1.1.94</ecNumber>
    </recommendedName>
    <alternativeName>
        <fullName evidence="1">NAD(P)(+)-dependent glycerol-3-phosphate dehydrogenase</fullName>
    </alternativeName>
    <alternativeName>
        <fullName evidence="1">NAD(P)H-dependent dihydroxyacetone-phosphate reductase</fullName>
    </alternativeName>
</protein>
<comment type="function">
    <text evidence="1">Catalyzes the reduction of the glycolytic intermediate dihydroxyacetone phosphate (DHAP) to sn-glycerol 3-phosphate (G3P), the key precursor for phospholipid synthesis.</text>
</comment>
<comment type="catalytic activity">
    <reaction evidence="1">
        <text>sn-glycerol 3-phosphate + NAD(+) = dihydroxyacetone phosphate + NADH + H(+)</text>
        <dbReference type="Rhea" id="RHEA:11092"/>
        <dbReference type="ChEBI" id="CHEBI:15378"/>
        <dbReference type="ChEBI" id="CHEBI:57540"/>
        <dbReference type="ChEBI" id="CHEBI:57597"/>
        <dbReference type="ChEBI" id="CHEBI:57642"/>
        <dbReference type="ChEBI" id="CHEBI:57945"/>
        <dbReference type="EC" id="1.1.1.94"/>
    </reaction>
    <physiologicalReaction direction="right-to-left" evidence="1">
        <dbReference type="Rhea" id="RHEA:11094"/>
    </physiologicalReaction>
</comment>
<comment type="catalytic activity">
    <reaction evidence="1">
        <text>sn-glycerol 3-phosphate + NADP(+) = dihydroxyacetone phosphate + NADPH + H(+)</text>
        <dbReference type="Rhea" id="RHEA:11096"/>
        <dbReference type="ChEBI" id="CHEBI:15378"/>
        <dbReference type="ChEBI" id="CHEBI:57597"/>
        <dbReference type="ChEBI" id="CHEBI:57642"/>
        <dbReference type="ChEBI" id="CHEBI:57783"/>
        <dbReference type="ChEBI" id="CHEBI:58349"/>
        <dbReference type="EC" id="1.1.1.94"/>
    </reaction>
    <physiologicalReaction direction="right-to-left" evidence="1">
        <dbReference type="Rhea" id="RHEA:11098"/>
    </physiologicalReaction>
</comment>
<comment type="pathway">
    <text evidence="1">Membrane lipid metabolism; glycerophospholipid metabolism.</text>
</comment>
<comment type="subcellular location">
    <subcellularLocation>
        <location evidence="1">Cytoplasm</location>
    </subcellularLocation>
</comment>
<comment type="similarity">
    <text evidence="1">Belongs to the NAD-dependent glycerol-3-phosphate dehydrogenase family.</text>
</comment>
<organism>
    <name type="scientific">Corynebacterium jeikeium (strain K411)</name>
    <dbReference type="NCBI Taxonomy" id="306537"/>
    <lineage>
        <taxon>Bacteria</taxon>
        <taxon>Bacillati</taxon>
        <taxon>Actinomycetota</taxon>
        <taxon>Actinomycetes</taxon>
        <taxon>Mycobacteriales</taxon>
        <taxon>Corynebacteriaceae</taxon>
        <taxon>Corynebacterium</taxon>
    </lineage>
</organism>
<dbReference type="EC" id="1.1.1.94" evidence="1"/>
<dbReference type="EMBL" id="CR931997">
    <property type="protein sequence ID" value="CAI37382.1"/>
    <property type="molecule type" value="Genomic_DNA"/>
</dbReference>
<dbReference type="RefSeq" id="WP_011273734.1">
    <property type="nucleotide sequence ID" value="NC_007164.1"/>
</dbReference>
<dbReference type="SMR" id="Q4JUX5"/>
<dbReference type="STRING" id="306537.jk1218"/>
<dbReference type="KEGG" id="cjk:jk1218"/>
<dbReference type="PATRIC" id="fig|306537.10.peg.1233"/>
<dbReference type="eggNOG" id="COG0240">
    <property type="taxonomic scope" value="Bacteria"/>
</dbReference>
<dbReference type="HOGENOM" id="CLU_033449_0_2_11"/>
<dbReference type="OrthoDB" id="9812273at2"/>
<dbReference type="UniPathway" id="UPA00940"/>
<dbReference type="Proteomes" id="UP000000545">
    <property type="component" value="Chromosome"/>
</dbReference>
<dbReference type="GO" id="GO:0005829">
    <property type="term" value="C:cytosol"/>
    <property type="evidence" value="ECO:0007669"/>
    <property type="project" value="TreeGrafter"/>
</dbReference>
<dbReference type="GO" id="GO:0047952">
    <property type="term" value="F:glycerol-3-phosphate dehydrogenase [NAD(P)+] activity"/>
    <property type="evidence" value="ECO:0007669"/>
    <property type="project" value="UniProtKB-UniRule"/>
</dbReference>
<dbReference type="GO" id="GO:0051287">
    <property type="term" value="F:NAD binding"/>
    <property type="evidence" value="ECO:0007669"/>
    <property type="project" value="InterPro"/>
</dbReference>
<dbReference type="GO" id="GO:0005975">
    <property type="term" value="P:carbohydrate metabolic process"/>
    <property type="evidence" value="ECO:0007669"/>
    <property type="project" value="InterPro"/>
</dbReference>
<dbReference type="GO" id="GO:0046167">
    <property type="term" value="P:glycerol-3-phosphate biosynthetic process"/>
    <property type="evidence" value="ECO:0007669"/>
    <property type="project" value="UniProtKB-UniRule"/>
</dbReference>
<dbReference type="GO" id="GO:0046168">
    <property type="term" value="P:glycerol-3-phosphate catabolic process"/>
    <property type="evidence" value="ECO:0007669"/>
    <property type="project" value="InterPro"/>
</dbReference>
<dbReference type="GO" id="GO:0006650">
    <property type="term" value="P:glycerophospholipid metabolic process"/>
    <property type="evidence" value="ECO:0007669"/>
    <property type="project" value="UniProtKB-UniRule"/>
</dbReference>
<dbReference type="GO" id="GO:0008654">
    <property type="term" value="P:phospholipid biosynthetic process"/>
    <property type="evidence" value="ECO:0007669"/>
    <property type="project" value="UniProtKB-KW"/>
</dbReference>
<dbReference type="FunFam" id="1.10.1040.10:FF:000001">
    <property type="entry name" value="Glycerol-3-phosphate dehydrogenase [NAD(P)+]"/>
    <property type="match status" value="1"/>
</dbReference>
<dbReference type="FunFam" id="3.40.50.720:FF:000019">
    <property type="entry name" value="Glycerol-3-phosphate dehydrogenase [NAD(P)+]"/>
    <property type="match status" value="1"/>
</dbReference>
<dbReference type="Gene3D" id="1.10.1040.10">
    <property type="entry name" value="N-(1-d-carboxylethyl)-l-norvaline Dehydrogenase, domain 2"/>
    <property type="match status" value="1"/>
</dbReference>
<dbReference type="Gene3D" id="3.40.50.720">
    <property type="entry name" value="NAD(P)-binding Rossmann-like Domain"/>
    <property type="match status" value="1"/>
</dbReference>
<dbReference type="HAMAP" id="MF_00394">
    <property type="entry name" value="NAD_Glyc3P_dehydrog"/>
    <property type="match status" value="1"/>
</dbReference>
<dbReference type="InterPro" id="IPR008927">
    <property type="entry name" value="6-PGluconate_DH-like_C_sf"/>
</dbReference>
<dbReference type="InterPro" id="IPR013328">
    <property type="entry name" value="6PGD_dom2"/>
</dbReference>
<dbReference type="InterPro" id="IPR006168">
    <property type="entry name" value="G3P_DH_NAD-dep"/>
</dbReference>
<dbReference type="InterPro" id="IPR006109">
    <property type="entry name" value="G3P_DH_NAD-dep_C"/>
</dbReference>
<dbReference type="InterPro" id="IPR011128">
    <property type="entry name" value="G3P_DH_NAD-dep_N"/>
</dbReference>
<dbReference type="InterPro" id="IPR036291">
    <property type="entry name" value="NAD(P)-bd_dom_sf"/>
</dbReference>
<dbReference type="NCBIfam" id="NF000940">
    <property type="entry name" value="PRK00094.1-2"/>
    <property type="match status" value="1"/>
</dbReference>
<dbReference type="NCBIfam" id="NF000942">
    <property type="entry name" value="PRK00094.1-4"/>
    <property type="match status" value="1"/>
</dbReference>
<dbReference type="PANTHER" id="PTHR11728">
    <property type="entry name" value="GLYCEROL-3-PHOSPHATE DEHYDROGENASE"/>
    <property type="match status" value="1"/>
</dbReference>
<dbReference type="PANTHER" id="PTHR11728:SF1">
    <property type="entry name" value="GLYCEROL-3-PHOSPHATE DEHYDROGENASE [NAD(+)] 2, CHLOROPLASTIC"/>
    <property type="match status" value="1"/>
</dbReference>
<dbReference type="Pfam" id="PF07479">
    <property type="entry name" value="NAD_Gly3P_dh_C"/>
    <property type="match status" value="1"/>
</dbReference>
<dbReference type="Pfam" id="PF01210">
    <property type="entry name" value="NAD_Gly3P_dh_N"/>
    <property type="match status" value="1"/>
</dbReference>
<dbReference type="PIRSF" id="PIRSF000114">
    <property type="entry name" value="Glycerol-3-P_dh"/>
    <property type="match status" value="1"/>
</dbReference>
<dbReference type="PRINTS" id="PR00077">
    <property type="entry name" value="GPDHDRGNASE"/>
</dbReference>
<dbReference type="SUPFAM" id="SSF48179">
    <property type="entry name" value="6-phosphogluconate dehydrogenase C-terminal domain-like"/>
    <property type="match status" value="1"/>
</dbReference>
<dbReference type="SUPFAM" id="SSF51735">
    <property type="entry name" value="NAD(P)-binding Rossmann-fold domains"/>
    <property type="match status" value="1"/>
</dbReference>
<dbReference type="PROSITE" id="PS00957">
    <property type="entry name" value="NAD_G3PDH"/>
    <property type="match status" value="1"/>
</dbReference>
<feature type="chain" id="PRO_0000255301" description="Glycerol-3-phosphate dehydrogenase [NAD(P)+]">
    <location>
        <begin position="1"/>
        <end position="332"/>
    </location>
</feature>
<feature type="active site" description="Proton acceptor" evidence="1">
    <location>
        <position position="191"/>
    </location>
</feature>
<feature type="binding site" evidence="1">
    <location>
        <position position="11"/>
    </location>
    <ligand>
        <name>NADPH</name>
        <dbReference type="ChEBI" id="CHEBI:57783"/>
    </ligand>
</feature>
<feature type="binding site" evidence="1">
    <location>
        <position position="12"/>
    </location>
    <ligand>
        <name>NADPH</name>
        <dbReference type="ChEBI" id="CHEBI:57783"/>
    </ligand>
</feature>
<feature type="binding site" evidence="1">
    <location>
        <position position="32"/>
    </location>
    <ligand>
        <name>NADPH</name>
        <dbReference type="ChEBI" id="CHEBI:57783"/>
    </ligand>
</feature>
<feature type="binding site" evidence="1">
    <location>
        <position position="33"/>
    </location>
    <ligand>
        <name>NADPH</name>
        <dbReference type="ChEBI" id="CHEBI:57783"/>
    </ligand>
</feature>
<feature type="binding site" evidence="1">
    <location>
        <position position="106"/>
    </location>
    <ligand>
        <name>NADPH</name>
        <dbReference type="ChEBI" id="CHEBI:57783"/>
    </ligand>
</feature>
<feature type="binding site" evidence="1">
    <location>
        <position position="106"/>
    </location>
    <ligand>
        <name>sn-glycerol 3-phosphate</name>
        <dbReference type="ChEBI" id="CHEBI:57597"/>
    </ligand>
</feature>
<feature type="binding site" evidence="1">
    <location>
        <position position="136"/>
    </location>
    <ligand>
        <name>sn-glycerol 3-phosphate</name>
        <dbReference type="ChEBI" id="CHEBI:57597"/>
    </ligand>
</feature>
<feature type="binding site" evidence="1">
    <location>
        <position position="140"/>
    </location>
    <ligand>
        <name>NADPH</name>
        <dbReference type="ChEBI" id="CHEBI:57783"/>
    </ligand>
</feature>
<feature type="binding site" evidence="1">
    <location>
        <position position="191"/>
    </location>
    <ligand>
        <name>sn-glycerol 3-phosphate</name>
        <dbReference type="ChEBI" id="CHEBI:57597"/>
    </ligand>
</feature>
<feature type="binding site" evidence="1">
    <location>
        <position position="244"/>
    </location>
    <ligand>
        <name>sn-glycerol 3-phosphate</name>
        <dbReference type="ChEBI" id="CHEBI:57597"/>
    </ligand>
</feature>
<feature type="binding site" evidence="1">
    <location>
        <position position="254"/>
    </location>
    <ligand>
        <name>sn-glycerol 3-phosphate</name>
        <dbReference type="ChEBI" id="CHEBI:57597"/>
    </ligand>
</feature>
<feature type="binding site" evidence="1">
    <location>
        <position position="255"/>
    </location>
    <ligand>
        <name>NADPH</name>
        <dbReference type="ChEBI" id="CHEBI:57783"/>
    </ligand>
</feature>
<feature type="binding site" evidence="1">
    <location>
        <position position="255"/>
    </location>
    <ligand>
        <name>sn-glycerol 3-phosphate</name>
        <dbReference type="ChEBI" id="CHEBI:57597"/>
    </ligand>
</feature>
<feature type="binding site" evidence="1">
    <location>
        <position position="256"/>
    </location>
    <ligand>
        <name>sn-glycerol 3-phosphate</name>
        <dbReference type="ChEBI" id="CHEBI:57597"/>
    </ligand>
</feature>
<feature type="binding site" evidence="1">
    <location>
        <position position="280"/>
    </location>
    <ligand>
        <name>NADPH</name>
        <dbReference type="ChEBI" id="CHEBI:57783"/>
    </ligand>
</feature>
<feature type="binding site" evidence="1">
    <location>
        <position position="282"/>
    </location>
    <ligand>
        <name>NADPH</name>
        <dbReference type="ChEBI" id="CHEBI:57783"/>
    </ligand>
</feature>
<proteinExistence type="inferred from homology"/>
<name>GPDA_CORJK</name>
<reference key="1">
    <citation type="journal article" date="2005" name="J. Bacteriol.">
        <title>Complete genome sequence and analysis of the multiresistant nosocomial pathogen Corynebacterium jeikeium K411, a lipid-requiring bacterium of the human skin flora.</title>
        <authorList>
            <person name="Tauch A."/>
            <person name="Kaiser O."/>
            <person name="Hain T."/>
            <person name="Goesmann A."/>
            <person name="Weisshaar B."/>
            <person name="Albersmeier A."/>
            <person name="Bekel T."/>
            <person name="Bischoff N."/>
            <person name="Brune I."/>
            <person name="Chakraborty T."/>
            <person name="Kalinowski J."/>
            <person name="Meyer F."/>
            <person name="Rupp O."/>
            <person name="Schneiker S."/>
            <person name="Viehoever P."/>
            <person name="Puehler A."/>
        </authorList>
    </citation>
    <scope>NUCLEOTIDE SEQUENCE [LARGE SCALE GENOMIC DNA]</scope>
    <source>
        <strain>K411</strain>
    </source>
</reference>
<evidence type="ECO:0000255" key="1">
    <source>
        <dbReference type="HAMAP-Rule" id="MF_00394"/>
    </source>
</evidence>
<gene>
    <name evidence="1" type="primary">gpsA</name>
    <name type="ordered locus">jk1218</name>
</gene>